<sequence length="602" mass="69930">MKNKNPFNIFFPLSLDKIENLEKIKKNCSSIQYAWLSGYFWNLANQTPSRLICEKNEFFRKDNEEKIITIISASQTGNARQLAKRFNKYLKNENKKTNLIDAADYNFKKIKNERFLILIISTQGEGEPPEEALSFYKFIMSKKAPRLENLHYSVFGLGDVSYNLFCQAGKDFDKRFSELGGKSLLHRLDSDIEYESNYIQWSEELLLAINKIDVSTCSVFKKNDKKNFIDKLNYTKYKPAVATVLLNQKITGRNSTKDVHHIELDITNSNIVYTPGDALGVWYQNSSQLIKQILKLLSIRISDKVKVKDKIITIFEALKKNFELTTNTKHIIQKYTDVTQNKFLKKIISDNKKLNNYVKKTPLLKMIYDHPKKLSSQQLISILRPLKPRLYSISSSQSEMNDEVHITVGVVKKQISGTIHLGGSSSYLSQFLKIDDSVKIFVEEKSNFRLPENKDVPIIMIGSGTGIAPFRAFIQQRDNDKATGKNWIFFGNPNFTEDFLYQLEWQKYLKKKLLTKMSLAWSRDQKEKIYVQDKIRENGKELWEWVNQGAQIYVCGNASKMAKDVEKELLDVFSKNGSMDIEESSEFLNNLRITRRYQRDVY</sequence>
<name>CYSJ_BUCAP</name>
<keyword id="KW-0028">Amino-acid biosynthesis</keyword>
<keyword id="KW-0198">Cysteine biosynthesis</keyword>
<keyword id="KW-0249">Electron transport</keyword>
<keyword id="KW-0274">FAD</keyword>
<keyword id="KW-0285">Flavoprotein</keyword>
<keyword id="KW-0288">FMN</keyword>
<keyword id="KW-0521">NADP</keyword>
<keyword id="KW-0560">Oxidoreductase</keyword>
<keyword id="KW-0813">Transport</keyword>
<dbReference type="EC" id="1.8.1.2" evidence="1"/>
<dbReference type="EMBL" id="AE013218">
    <property type="protein sequence ID" value="AAM67958.1"/>
    <property type="molecule type" value="Genomic_DNA"/>
</dbReference>
<dbReference type="RefSeq" id="WP_011053925.1">
    <property type="nucleotide sequence ID" value="NC_004061.1"/>
</dbReference>
<dbReference type="SMR" id="Q8K9D3"/>
<dbReference type="STRING" id="198804.BUsg_413"/>
<dbReference type="GeneID" id="93003885"/>
<dbReference type="KEGG" id="bas:BUsg_413"/>
<dbReference type="eggNOG" id="COG0369">
    <property type="taxonomic scope" value="Bacteria"/>
</dbReference>
<dbReference type="HOGENOM" id="CLU_001570_17_7_6"/>
<dbReference type="UniPathway" id="UPA00140">
    <property type="reaction ID" value="UER00207"/>
</dbReference>
<dbReference type="Proteomes" id="UP000000416">
    <property type="component" value="Chromosome"/>
</dbReference>
<dbReference type="GO" id="GO:0005829">
    <property type="term" value="C:cytosol"/>
    <property type="evidence" value="ECO:0007669"/>
    <property type="project" value="TreeGrafter"/>
</dbReference>
<dbReference type="GO" id="GO:0050660">
    <property type="term" value="F:flavin adenine dinucleotide binding"/>
    <property type="evidence" value="ECO:0007669"/>
    <property type="project" value="InterPro"/>
</dbReference>
<dbReference type="GO" id="GO:0010181">
    <property type="term" value="F:FMN binding"/>
    <property type="evidence" value="ECO:0007669"/>
    <property type="project" value="InterPro"/>
</dbReference>
<dbReference type="GO" id="GO:0004783">
    <property type="term" value="F:sulfite reductase (NADPH) activity"/>
    <property type="evidence" value="ECO:0007669"/>
    <property type="project" value="UniProtKB-UniRule"/>
</dbReference>
<dbReference type="GO" id="GO:0019344">
    <property type="term" value="P:cysteine biosynthetic process"/>
    <property type="evidence" value="ECO:0007669"/>
    <property type="project" value="UniProtKB-KW"/>
</dbReference>
<dbReference type="GO" id="GO:0070814">
    <property type="term" value="P:hydrogen sulfide biosynthetic process"/>
    <property type="evidence" value="ECO:0007669"/>
    <property type="project" value="UniProtKB-UniRule"/>
</dbReference>
<dbReference type="GO" id="GO:0000103">
    <property type="term" value="P:sulfate assimilation"/>
    <property type="evidence" value="ECO:0007669"/>
    <property type="project" value="UniProtKB-UniRule"/>
</dbReference>
<dbReference type="FunFam" id="3.40.50.80:FF:000001">
    <property type="entry name" value="NADPH--cytochrome P450 reductase 1"/>
    <property type="match status" value="1"/>
</dbReference>
<dbReference type="Gene3D" id="3.40.50.360">
    <property type="match status" value="1"/>
</dbReference>
<dbReference type="Gene3D" id="1.20.990.10">
    <property type="entry name" value="NADPH-cytochrome p450 Reductase, Chain A, domain 3"/>
    <property type="match status" value="1"/>
</dbReference>
<dbReference type="Gene3D" id="3.40.50.80">
    <property type="entry name" value="Nucleotide-binding domain of ferredoxin-NADP reductase (FNR) module"/>
    <property type="match status" value="1"/>
</dbReference>
<dbReference type="Gene3D" id="2.40.30.10">
    <property type="entry name" value="Translation factors"/>
    <property type="match status" value="1"/>
</dbReference>
<dbReference type="HAMAP" id="MF_01541">
    <property type="entry name" value="CysJ"/>
    <property type="match status" value="1"/>
</dbReference>
<dbReference type="InterPro" id="IPR010199">
    <property type="entry name" value="CysJ"/>
</dbReference>
<dbReference type="InterPro" id="IPR003097">
    <property type="entry name" value="CysJ-like_FAD-binding"/>
</dbReference>
<dbReference type="InterPro" id="IPR029758">
    <property type="entry name" value="CysJ_Proteobact"/>
</dbReference>
<dbReference type="InterPro" id="IPR017927">
    <property type="entry name" value="FAD-bd_FR_type"/>
</dbReference>
<dbReference type="InterPro" id="IPR001094">
    <property type="entry name" value="Flavdoxin-like"/>
</dbReference>
<dbReference type="InterPro" id="IPR008254">
    <property type="entry name" value="Flavodoxin/NO_synth"/>
</dbReference>
<dbReference type="InterPro" id="IPR001709">
    <property type="entry name" value="Flavoprot_Pyr_Nucl_cyt_Rdtase"/>
</dbReference>
<dbReference type="InterPro" id="IPR029039">
    <property type="entry name" value="Flavoprotein-like_sf"/>
</dbReference>
<dbReference type="InterPro" id="IPR039261">
    <property type="entry name" value="FNR_nucleotide-bd"/>
</dbReference>
<dbReference type="InterPro" id="IPR023173">
    <property type="entry name" value="NADPH_Cyt_P450_Rdtase_alpha"/>
</dbReference>
<dbReference type="InterPro" id="IPR001433">
    <property type="entry name" value="OxRdtase_FAD/NAD-bd"/>
</dbReference>
<dbReference type="InterPro" id="IPR017938">
    <property type="entry name" value="Riboflavin_synthase-like_b-brl"/>
</dbReference>
<dbReference type="NCBIfam" id="TIGR01931">
    <property type="entry name" value="cysJ"/>
    <property type="match status" value="1"/>
</dbReference>
<dbReference type="PANTHER" id="PTHR19384:SF128">
    <property type="entry name" value="NADPH OXIDOREDUCTASE A"/>
    <property type="match status" value="1"/>
</dbReference>
<dbReference type="PANTHER" id="PTHR19384">
    <property type="entry name" value="NITRIC OXIDE SYNTHASE-RELATED"/>
    <property type="match status" value="1"/>
</dbReference>
<dbReference type="Pfam" id="PF00667">
    <property type="entry name" value="FAD_binding_1"/>
    <property type="match status" value="1"/>
</dbReference>
<dbReference type="Pfam" id="PF00258">
    <property type="entry name" value="Flavodoxin_1"/>
    <property type="match status" value="1"/>
</dbReference>
<dbReference type="Pfam" id="PF00175">
    <property type="entry name" value="NAD_binding_1"/>
    <property type="match status" value="1"/>
</dbReference>
<dbReference type="PIRSF" id="PIRSF000207">
    <property type="entry name" value="SiR-FP_CysJ"/>
    <property type="match status" value="1"/>
</dbReference>
<dbReference type="PRINTS" id="PR00369">
    <property type="entry name" value="FLAVODOXIN"/>
</dbReference>
<dbReference type="PRINTS" id="PR00371">
    <property type="entry name" value="FPNCR"/>
</dbReference>
<dbReference type="SUPFAM" id="SSF52343">
    <property type="entry name" value="Ferredoxin reductase-like, C-terminal NADP-linked domain"/>
    <property type="match status" value="1"/>
</dbReference>
<dbReference type="SUPFAM" id="SSF52218">
    <property type="entry name" value="Flavoproteins"/>
    <property type="match status" value="1"/>
</dbReference>
<dbReference type="SUPFAM" id="SSF63380">
    <property type="entry name" value="Riboflavin synthase domain-like"/>
    <property type="match status" value="1"/>
</dbReference>
<dbReference type="PROSITE" id="PS51384">
    <property type="entry name" value="FAD_FR"/>
    <property type="match status" value="1"/>
</dbReference>
<dbReference type="PROSITE" id="PS50902">
    <property type="entry name" value="FLAVODOXIN_LIKE"/>
    <property type="match status" value="1"/>
</dbReference>
<feature type="chain" id="PRO_0000199921" description="Sulfite reductase [NADPH] flavoprotein alpha-component">
    <location>
        <begin position="1"/>
        <end position="602"/>
    </location>
</feature>
<feature type="domain" description="Flavodoxin-like" evidence="1">
    <location>
        <begin position="68"/>
        <end position="206"/>
    </location>
</feature>
<feature type="domain" description="FAD-binding FR-type" evidence="1">
    <location>
        <begin position="237"/>
        <end position="451"/>
    </location>
</feature>
<feature type="binding site" evidence="1">
    <location>
        <begin position="74"/>
        <end position="79"/>
    </location>
    <ligand>
        <name>FMN</name>
        <dbReference type="ChEBI" id="CHEBI:58210"/>
    </ligand>
</feature>
<feature type="binding site" evidence="1">
    <location>
        <begin position="121"/>
        <end position="124"/>
    </location>
    <ligand>
        <name>FMN</name>
        <dbReference type="ChEBI" id="CHEBI:58210"/>
    </ligand>
</feature>
<feature type="binding site" evidence="1">
    <location>
        <begin position="157"/>
        <end position="166"/>
    </location>
    <ligand>
        <name>FMN</name>
        <dbReference type="ChEBI" id="CHEBI:58210"/>
    </ligand>
</feature>
<feature type="binding site" evidence="1">
    <location>
        <position position="325"/>
    </location>
    <ligand>
        <name>FAD</name>
        <dbReference type="ChEBI" id="CHEBI:57692"/>
    </ligand>
</feature>
<feature type="binding site" evidence="1">
    <location>
        <position position="359"/>
    </location>
    <ligand>
        <name>FAD</name>
        <dbReference type="ChEBI" id="CHEBI:57692"/>
    </ligand>
</feature>
<feature type="binding site" evidence="1">
    <location>
        <begin position="389"/>
        <end position="392"/>
    </location>
    <ligand>
        <name>FAD</name>
        <dbReference type="ChEBI" id="CHEBI:57692"/>
    </ligand>
</feature>
<feature type="binding site" evidence="1">
    <location>
        <begin position="407"/>
        <end position="409"/>
    </location>
    <ligand>
        <name>FAD</name>
        <dbReference type="ChEBI" id="CHEBI:57692"/>
    </ligand>
</feature>
<feature type="binding site" evidence="1">
    <location>
        <begin position="422"/>
        <end position="425"/>
    </location>
    <ligand>
        <name>FAD</name>
        <dbReference type="ChEBI" id="CHEBI:57692"/>
    </ligand>
</feature>
<feature type="binding site" evidence="1">
    <location>
        <begin position="522"/>
        <end position="523"/>
    </location>
    <ligand>
        <name>NADP(+)</name>
        <dbReference type="ChEBI" id="CHEBI:58349"/>
    </ligand>
</feature>
<feature type="binding site" evidence="1">
    <location>
        <begin position="528"/>
        <end position="532"/>
    </location>
    <ligand>
        <name>NADP(+)</name>
        <dbReference type="ChEBI" id="CHEBI:58349"/>
    </ligand>
</feature>
<feature type="binding site" evidence="1">
    <location>
        <position position="564"/>
    </location>
    <ligand>
        <name>NADP(+)</name>
        <dbReference type="ChEBI" id="CHEBI:58349"/>
    </ligand>
</feature>
<feature type="binding site" evidence="1">
    <location>
        <position position="602"/>
    </location>
    <ligand>
        <name>FAD</name>
        <dbReference type="ChEBI" id="CHEBI:57692"/>
    </ligand>
</feature>
<accession>Q8K9D3</accession>
<gene>
    <name evidence="1" type="primary">cysJ</name>
    <name type="ordered locus">BUsg_413</name>
</gene>
<organism>
    <name type="scientific">Buchnera aphidicola subsp. Schizaphis graminum (strain Sg)</name>
    <dbReference type="NCBI Taxonomy" id="198804"/>
    <lineage>
        <taxon>Bacteria</taxon>
        <taxon>Pseudomonadati</taxon>
        <taxon>Pseudomonadota</taxon>
        <taxon>Gammaproteobacteria</taxon>
        <taxon>Enterobacterales</taxon>
        <taxon>Erwiniaceae</taxon>
        <taxon>Buchnera</taxon>
    </lineage>
</organism>
<evidence type="ECO:0000255" key="1">
    <source>
        <dbReference type="HAMAP-Rule" id="MF_01541"/>
    </source>
</evidence>
<proteinExistence type="inferred from homology"/>
<protein>
    <recommendedName>
        <fullName evidence="1">Sulfite reductase [NADPH] flavoprotein alpha-component</fullName>
        <shortName evidence="1">SiR-FP</shortName>
        <ecNumber evidence="1">1.8.1.2</ecNumber>
    </recommendedName>
</protein>
<reference key="1">
    <citation type="journal article" date="2002" name="Science">
        <title>50 million years of genomic stasis in endosymbiotic bacteria.</title>
        <authorList>
            <person name="Tamas I."/>
            <person name="Klasson L."/>
            <person name="Canbaeck B."/>
            <person name="Naeslund A.K."/>
            <person name="Eriksson A.-S."/>
            <person name="Wernegreen J.J."/>
            <person name="Sandstroem J.P."/>
            <person name="Moran N.A."/>
            <person name="Andersson S.G.E."/>
        </authorList>
    </citation>
    <scope>NUCLEOTIDE SEQUENCE [LARGE SCALE GENOMIC DNA]</scope>
    <source>
        <strain>Sg</strain>
    </source>
</reference>
<comment type="function">
    <text evidence="1">Component of the sulfite reductase complex that catalyzes the 6-electron reduction of sulfite to sulfide. This is one of several activities required for the biosynthesis of L-cysteine from sulfate. The flavoprotein component catalyzes the electron flow from NADPH -&gt; FAD -&gt; FMN to the hemoprotein component.</text>
</comment>
<comment type="catalytic activity">
    <reaction evidence="1">
        <text>hydrogen sulfide + 3 NADP(+) + 3 H2O = sulfite + 3 NADPH + 4 H(+)</text>
        <dbReference type="Rhea" id="RHEA:13801"/>
        <dbReference type="ChEBI" id="CHEBI:15377"/>
        <dbReference type="ChEBI" id="CHEBI:15378"/>
        <dbReference type="ChEBI" id="CHEBI:17359"/>
        <dbReference type="ChEBI" id="CHEBI:29919"/>
        <dbReference type="ChEBI" id="CHEBI:57783"/>
        <dbReference type="ChEBI" id="CHEBI:58349"/>
        <dbReference type="EC" id="1.8.1.2"/>
    </reaction>
</comment>
<comment type="cofactor">
    <cofactor evidence="1">
        <name>FAD</name>
        <dbReference type="ChEBI" id="CHEBI:57692"/>
    </cofactor>
    <text evidence="1">Binds 1 FAD per subunit.</text>
</comment>
<comment type="cofactor">
    <cofactor evidence="1">
        <name>FMN</name>
        <dbReference type="ChEBI" id="CHEBI:58210"/>
    </cofactor>
    <text evidence="1">Binds 1 FMN per subunit.</text>
</comment>
<comment type="pathway">
    <text evidence="1">Sulfur metabolism; hydrogen sulfide biosynthesis; hydrogen sulfide from sulfite (NADPH route): step 1/1.</text>
</comment>
<comment type="subunit">
    <text evidence="1">Alpha(8)-beta(8). The alpha component is a flavoprotein, the beta component is a hemoprotein.</text>
</comment>
<comment type="similarity">
    <text evidence="1">Belongs to the NADPH-dependent sulphite reductase flavoprotein subunit CysJ family.</text>
</comment>
<comment type="similarity">
    <text evidence="1">In the N-terminal section; belongs to the flavodoxin family.</text>
</comment>
<comment type="similarity">
    <text evidence="1">In the C-terminal section; belongs to the flavoprotein pyridine nucleotide cytochrome reductase family.</text>
</comment>